<evidence type="ECO:0000255" key="1">
    <source>
        <dbReference type="HAMAP-Rule" id="MF_00175"/>
    </source>
</evidence>
<evidence type="ECO:0000255" key="2">
    <source>
        <dbReference type="PROSITE-ProRule" id="PRU01250"/>
    </source>
</evidence>
<reference key="1">
    <citation type="journal article" date="2010" name="Genome Biol. Evol.">
        <title>Continuing evolution of Burkholderia mallei through genome reduction and large-scale rearrangements.</title>
        <authorList>
            <person name="Losada L."/>
            <person name="Ronning C.M."/>
            <person name="DeShazer D."/>
            <person name="Woods D."/>
            <person name="Fedorova N."/>
            <person name="Kim H.S."/>
            <person name="Shabalina S.A."/>
            <person name="Pearson T.R."/>
            <person name="Brinkac L."/>
            <person name="Tan P."/>
            <person name="Nandi T."/>
            <person name="Crabtree J."/>
            <person name="Badger J."/>
            <person name="Beckstrom-Sternberg S."/>
            <person name="Saqib M."/>
            <person name="Schutzer S.E."/>
            <person name="Keim P."/>
            <person name="Nierman W.C."/>
        </authorList>
    </citation>
    <scope>NUCLEOTIDE SEQUENCE [LARGE SCALE GENOMIC DNA]</scope>
    <source>
        <strain>SAVP1</strain>
    </source>
</reference>
<dbReference type="EMBL" id="CP000526">
    <property type="protein sequence ID" value="ABM51745.1"/>
    <property type="molecule type" value="Genomic_DNA"/>
</dbReference>
<dbReference type="RefSeq" id="WP_004192165.1">
    <property type="nucleotide sequence ID" value="NC_008785.1"/>
</dbReference>
<dbReference type="SMR" id="A1V4X0"/>
<dbReference type="GeneID" id="92979195"/>
<dbReference type="KEGG" id="bmv:BMASAVP1_A1956"/>
<dbReference type="HOGENOM" id="CLU_014218_8_2_4"/>
<dbReference type="GO" id="GO:0009376">
    <property type="term" value="C:HslUV protease complex"/>
    <property type="evidence" value="ECO:0007669"/>
    <property type="project" value="TreeGrafter"/>
</dbReference>
<dbReference type="GO" id="GO:0005524">
    <property type="term" value="F:ATP binding"/>
    <property type="evidence" value="ECO:0007669"/>
    <property type="project" value="UniProtKB-UniRule"/>
</dbReference>
<dbReference type="GO" id="GO:0016887">
    <property type="term" value="F:ATP hydrolysis activity"/>
    <property type="evidence" value="ECO:0007669"/>
    <property type="project" value="InterPro"/>
</dbReference>
<dbReference type="GO" id="GO:0140662">
    <property type="term" value="F:ATP-dependent protein folding chaperone"/>
    <property type="evidence" value="ECO:0007669"/>
    <property type="project" value="InterPro"/>
</dbReference>
<dbReference type="GO" id="GO:0046983">
    <property type="term" value="F:protein dimerization activity"/>
    <property type="evidence" value="ECO:0007669"/>
    <property type="project" value="InterPro"/>
</dbReference>
<dbReference type="GO" id="GO:0051082">
    <property type="term" value="F:unfolded protein binding"/>
    <property type="evidence" value="ECO:0007669"/>
    <property type="project" value="UniProtKB-UniRule"/>
</dbReference>
<dbReference type="GO" id="GO:0008270">
    <property type="term" value="F:zinc ion binding"/>
    <property type="evidence" value="ECO:0007669"/>
    <property type="project" value="InterPro"/>
</dbReference>
<dbReference type="GO" id="GO:0051301">
    <property type="term" value="P:cell division"/>
    <property type="evidence" value="ECO:0007669"/>
    <property type="project" value="TreeGrafter"/>
</dbReference>
<dbReference type="GO" id="GO:0051603">
    <property type="term" value="P:proteolysis involved in protein catabolic process"/>
    <property type="evidence" value="ECO:0007669"/>
    <property type="project" value="TreeGrafter"/>
</dbReference>
<dbReference type="CDD" id="cd19497">
    <property type="entry name" value="RecA-like_ClpX"/>
    <property type="match status" value="1"/>
</dbReference>
<dbReference type="FunFam" id="1.10.8.60:FF:000002">
    <property type="entry name" value="ATP-dependent Clp protease ATP-binding subunit ClpX"/>
    <property type="match status" value="1"/>
</dbReference>
<dbReference type="FunFam" id="3.40.50.300:FF:000005">
    <property type="entry name" value="ATP-dependent Clp protease ATP-binding subunit ClpX"/>
    <property type="match status" value="1"/>
</dbReference>
<dbReference type="Gene3D" id="1.10.8.60">
    <property type="match status" value="1"/>
</dbReference>
<dbReference type="Gene3D" id="6.20.220.10">
    <property type="entry name" value="ClpX chaperone, C4-type zinc finger domain"/>
    <property type="match status" value="1"/>
</dbReference>
<dbReference type="Gene3D" id="3.40.50.300">
    <property type="entry name" value="P-loop containing nucleotide triphosphate hydrolases"/>
    <property type="match status" value="1"/>
</dbReference>
<dbReference type="HAMAP" id="MF_00175">
    <property type="entry name" value="ClpX"/>
    <property type="match status" value="1"/>
</dbReference>
<dbReference type="InterPro" id="IPR003593">
    <property type="entry name" value="AAA+_ATPase"/>
</dbReference>
<dbReference type="InterPro" id="IPR050052">
    <property type="entry name" value="ATP-dep_Clp_protease_ClpX"/>
</dbReference>
<dbReference type="InterPro" id="IPR003959">
    <property type="entry name" value="ATPase_AAA_core"/>
</dbReference>
<dbReference type="InterPro" id="IPR019489">
    <property type="entry name" value="Clp_ATPase_C"/>
</dbReference>
<dbReference type="InterPro" id="IPR004487">
    <property type="entry name" value="Clp_protease_ATP-bd_su_ClpX"/>
</dbReference>
<dbReference type="InterPro" id="IPR046425">
    <property type="entry name" value="ClpX_bact"/>
</dbReference>
<dbReference type="InterPro" id="IPR027417">
    <property type="entry name" value="P-loop_NTPase"/>
</dbReference>
<dbReference type="InterPro" id="IPR010603">
    <property type="entry name" value="Znf_CppX_C4"/>
</dbReference>
<dbReference type="InterPro" id="IPR038366">
    <property type="entry name" value="Znf_CppX_C4_sf"/>
</dbReference>
<dbReference type="NCBIfam" id="TIGR00382">
    <property type="entry name" value="clpX"/>
    <property type="match status" value="1"/>
</dbReference>
<dbReference type="NCBIfam" id="NF003745">
    <property type="entry name" value="PRK05342.1"/>
    <property type="match status" value="1"/>
</dbReference>
<dbReference type="PANTHER" id="PTHR48102:SF7">
    <property type="entry name" value="ATP-DEPENDENT CLP PROTEASE ATP-BINDING SUBUNIT CLPX-LIKE, MITOCHONDRIAL"/>
    <property type="match status" value="1"/>
</dbReference>
<dbReference type="PANTHER" id="PTHR48102">
    <property type="entry name" value="ATP-DEPENDENT CLP PROTEASE ATP-BINDING SUBUNIT CLPX-LIKE, MITOCHONDRIAL-RELATED"/>
    <property type="match status" value="1"/>
</dbReference>
<dbReference type="Pfam" id="PF07724">
    <property type="entry name" value="AAA_2"/>
    <property type="match status" value="1"/>
</dbReference>
<dbReference type="Pfam" id="PF10431">
    <property type="entry name" value="ClpB_D2-small"/>
    <property type="match status" value="1"/>
</dbReference>
<dbReference type="Pfam" id="PF06689">
    <property type="entry name" value="zf-C4_ClpX"/>
    <property type="match status" value="1"/>
</dbReference>
<dbReference type="SMART" id="SM00382">
    <property type="entry name" value="AAA"/>
    <property type="match status" value="1"/>
</dbReference>
<dbReference type="SMART" id="SM01086">
    <property type="entry name" value="ClpB_D2-small"/>
    <property type="match status" value="1"/>
</dbReference>
<dbReference type="SMART" id="SM00994">
    <property type="entry name" value="zf-C4_ClpX"/>
    <property type="match status" value="1"/>
</dbReference>
<dbReference type="SUPFAM" id="SSF57716">
    <property type="entry name" value="Glucocorticoid receptor-like (DNA-binding domain)"/>
    <property type="match status" value="1"/>
</dbReference>
<dbReference type="SUPFAM" id="SSF52540">
    <property type="entry name" value="P-loop containing nucleoside triphosphate hydrolases"/>
    <property type="match status" value="1"/>
</dbReference>
<dbReference type="PROSITE" id="PS51902">
    <property type="entry name" value="CLPX_ZB"/>
    <property type="match status" value="1"/>
</dbReference>
<protein>
    <recommendedName>
        <fullName evidence="1">ATP-dependent Clp protease ATP-binding subunit ClpX</fullName>
    </recommendedName>
</protein>
<sequence>MADKKGSNSEKLLYCSFCGKSQHEVKKLIAGPSVFICDECIDLCNEIIRDEAAAAGVEASLSKSDLPSPQEIRDILDQYVIGQERAKKILAVAVYNHYKRLKHLDKKDDVELSKSNILLIGPTGSGKTLLAQTLARLLNVPFVIADATTLTEAGYVGEDVENIIQKLLQNCNYEVEKAQRGIVYIDEIDKISCKSDNPSITRDVSGEGVQQALLKLVEGTMASVPPQGGRKHPNQDFIQVDTTNILFICGGAFDGLEKVITDRTEKTGIGFGATVKSKQERDAGEVLREVEPEDLIKFGLIPELIGRLPVVATLGKLDEAALMKILVEPKNALVKQYQKLFAMERVELEIRPDALQAVARKAIRRKTGARGLRSIIEQALLDVMYELPTLKGVSKVIIDDNVIEGDGKPLLIYEDTPKVAGSN</sequence>
<accession>A1V4X0</accession>
<gene>
    <name evidence="1" type="primary">clpX</name>
    <name type="ordered locus">BMASAVP1_A1956</name>
</gene>
<proteinExistence type="inferred from homology"/>
<comment type="function">
    <text evidence="1">ATP-dependent specificity component of the Clp protease. It directs the protease to specific substrates. Can perform chaperone functions in the absence of ClpP.</text>
</comment>
<comment type="subunit">
    <text evidence="1">Component of the ClpX-ClpP complex. Forms a hexameric ring that, in the presence of ATP, binds to fourteen ClpP subunits assembled into a disk-like structure with a central cavity, resembling the structure of eukaryotic proteasomes.</text>
</comment>
<comment type="similarity">
    <text evidence="1">Belongs to the ClpX chaperone family.</text>
</comment>
<name>CLPX_BURMS</name>
<feature type="chain" id="PRO_1000024530" description="ATP-dependent Clp protease ATP-binding subunit ClpX">
    <location>
        <begin position="1"/>
        <end position="423"/>
    </location>
</feature>
<feature type="domain" description="ClpX-type ZB" evidence="2">
    <location>
        <begin position="3"/>
        <end position="56"/>
    </location>
</feature>
<feature type="binding site" evidence="2">
    <location>
        <position position="15"/>
    </location>
    <ligand>
        <name>Zn(2+)</name>
        <dbReference type="ChEBI" id="CHEBI:29105"/>
    </ligand>
</feature>
<feature type="binding site" evidence="2">
    <location>
        <position position="18"/>
    </location>
    <ligand>
        <name>Zn(2+)</name>
        <dbReference type="ChEBI" id="CHEBI:29105"/>
    </ligand>
</feature>
<feature type="binding site" evidence="2">
    <location>
        <position position="37"/>
    </location>
    <ligand>
        <name>Zn(2+)</name>
        <dbReference type="ChEBI" id="CHEBI:29105"/>
    </ligand>
</feature>
<feature type="binding site" evidence="2">
    <location>
        <position position="40"/>
    </location>
    <ligand>
        <name>Zn(2+)</name>
        <dbReference type="ChEBI" id="CHEBI:29105"/>
    </ligand>
</feature>
<feature type="binding site" evidence="1">
    <location>
        <begin position="122"/>
        <end position="129"/>
    </location>
    <ligand>
        <name>ATP</name>
        <dbReference type="ChEBI" id="CHEBI:30616"/>
    </ligand>
</feature>
<keyword id="KW-0067">ATP-binding</keyword>
<keyword id="KW-0143">Chaperone</keyword>
<keyword id="KW-0479">Metal-binding</keyword>
<keyword id="KW-0547">Nucleotide-binding</keyword>
<keyword id="KW-0862">Zinc</keyword>
<organism>
    <name type="scientific">Burkholderia mallei (strain SAVP1)</name>
    <dbReference type="NCBI Taxonomy" id="320388"/>
    <lineage>
        <taxon>Bacteria</taxon>
        <taxon>Pseudomonadati</taxon>
        <taxon>Pseudomonadota</taxon>
        <taxon>Betaproteobacteria</taxon>
        <taxon>Burkholderiales</taxon>
        <taxon>Burkholderiaceae</taxon>
        <taxon>Burkholderia</taxon>
        <taxon>pseudomallei group</taxon>
    </lineage>
</organism>